<dbReference type="EMBL" id="BA000018">
    <property type="protein sequence ID" value="BAB43649.1"/>
    <property type="molecule type" value="Genomic_DNA"/>
</dbReference>
<dbReference type="PIR" id="G90060">
    <property type="entry name" value="G90060"/>
</dbReference>
<dbReference type="RefSeq" id="WP_000076661.1">
    <property type="nucleotide sequence ID" value="NC_002745.2"/>
</dbReference>
<dbReference type="SMR" id="Q7A3E5"/>
<dbReference type="EnsemblBacteria" id="BAB43649">
    <property type="protein sequence ID" value="BAB43649"/>
    <property type="gene ID" value="BAB43649"/>
</dbReference>
<dbReference type="KEGG" id="sau:SA2345"/>
<dbReference type="HOGENOM" id="CLU_134973_10_4_9"/>
<dbReference type="GO" id="GO:0005737">
    <property type="term" value="C:cytoplasm"/>
    <property type="evidence" value="ECO:0007669"/>
    <property type="project" value="UniProtKB-SubCell"/>
</dbReference>
<dbReference type="GO" id="GO:0005507">
    <property type="term" value="F:copper ion binding"/>
    <property type="evidence" value="ECO:0007669"/>
    <property type="project" value="InterPro"/>
</dbReference>
<dbReference type="CDD" id="cd00371">
    <property type="entry name" value="HMA"/>
    <property type="match status" value="1"/>
</dbReference>
<dbReference type="FunFam" id="3.30.70.100:FF:000005">
    <property type="entry name" value="Copper-exporting P-type ATPase A"/>
    <property type="match status" value="1"/>
</dbReference>
<dbReference type="Gene3D" id="3.30.70.100">
    <property type="match status" value="1"/>
</dbReference>
<dbReference type="InterPro" id="IPR049740">
    <property type="entry name" value="CopZ"/>
</dbReference>
<dbReference type="InterPro" id="IPR017969">
    <property type="entry name" value="Heavy-metal-associated_CS"/>
</dbReference>
<dbReference type="InterPro" id="IPR006122">
    <property type="entry name" value="HMA_Cu_ion-bd"/>
</dbReference>
<dbReference type="InterPro" id="IPR006121">
    <property type="entry name" value="HMA_dom"/>
</dbReference>
<dbReference type="InterPro" id="IPR036163">
    <property type="entry name" value="HMA_dom_sf"/>
</dbReference>
<dbReference type="InterPro" id="IPR001802">
    <property type="entry name" value="MerP/CopZ"/>
</dbReference>
<dbReference type="NCBIfam" id="NF033795">
    <property type="entry name" value="chaper_CopZ_Bs"/>
    <property type="match status" value="1"/>
</dbReference>
<dbReference type="NCBIfam" id="TIGR00003">
    <property type="entry name" value="copper ion binding protein"/>
    <property type="match status" value="1"/>
</dbReference>
<dbReference type="PANTHER" id="PTHR46594">
    <property type="entry name" value="P-TYPE CATION-TRANSPORTING ATPASE"/>
    <property type="match status" value="1"/>
</dbReference>
<dbReference type="PANTHER" id="PTHR46594:SF4">
    <property type="entry name" value="P-TYPE CATION-TRANSPORTING ATPASE"/>
    <property type="match status" value="1"/>
</dbReference>
<dbReference type="Pfam" id="PF00403">
    <property type="entry name" value="HMA"/>
    <property type="match status" value="1"/>
</dbReference>
<dbReference type="PRINTS" id="PR00946">
    <property type="entry name" value="HGSCAVENGER"/>
</dbReference>
<dbReference type="SUPFAM" id="SSF55008">
    <property type="entry name" value="HMA, heavy metal-associated domain"/>
    <property type="match status" value="1"/>
</dbReference>
<dbReference type="PROSITE" id="PS01047">
    <property type="entry name" value="HMA_1"/>
    <property type="match status" value="1"/>
</dbReference>
<dbReference type="PROSITE" id="PS50846">
    <property type="entry name" value="HMA_2"/>
    <property type="match status" value="1"/>
</dbReference>
<proteinExistence type="evidence at protein level"/>
<comment type="function">
    <text evidence="1">Chaperone that serves for the intracellular sequestration and transport of Cu(+). Delivers Cu(+) to the copper-exporting P-type ATPase A (CopA) (By similarity).</text>
</comment>
<comment type="subcellular location">
    <subcellularLocation>
        <location evidence="1">Cytoplasm</location>
    </subcellularLocation>
</comment>
<feature type="chain" id="PRO_0000351279" description="Copper chaperone CopZ">
    <location>
        <begin position="1"/>
        <end position="68"/>
    </location>
</feature>
<feature type="domain" description="HMA" evidence="2">
    <location>
        <begin position="2"/>
        <end position="68"/>
    </location>
</feature>
<feature type="binding site" evidence="2">
    <location>
        <position position="13"/>
    </location>
    <ligand>
        <name>Cu cation</name>
        <dbReference type="ChEBI" id="CHEBI:23378"/>
    </ligand>
</feature>
<feature type="binding site" evidence="2">
    <location>
        <position position="16"/>
    </location>
    <ligand>
        <name>Cu cation</name>
        <dbReference type="ChEBI" id="CHEBI:23378"/>
    </ligand>
</feature>
<organism>
    <name type="scientific">Staphylococcus aureus (strain N315)</name>
    <dbReference type="NCBI Taxonomy" id="158879"/>
    <lineage>
        <taxon>Bacteria</taxon>
        <taxon>Bacillati</taxon>
        <taxon>Bacillota</taxon>
        <taxon>Bacilli</taxon>
        <taxon>Bacillales</taxon>
        <taxon>Staphylococcaceae</taxon>
        <taxon>Staphylococcus</taxon>
    </lineage>
</organism>
<sequence length="68" mass="7237">MSQEILNVEGMSCGHCKSAVESALNNIDGVTSADVNLENGQVSVQYDDSKVAVSQMKDAIEDQGYDVV</sequence>
<gene>
    <name type="primary">copZ</name>
    <name type="ordered locus">SA2345</name>
</gene>
<name>COPZ_STAAN</name>
<keyword id="KW-0143">Chaperone</keyword>
<keyword id="KW-0186">Copper</keyword>
<keyword id="KW-0963">Cytoplasm</keyword>
<keyword id="KW-0479">Metal-binding</keyword>
<accession>Q7A3E5</accession>
<reference key="1">
    <citation type="journal article" date="2001" name="Lancet">
        <title>Whole genome sequencing of meticillin-resistant Staphylococcus aureus.</title>
        <authorList>
            <person name="Kuroda M."/>
            <person name="Ohta T."/>
            <person name="Uchiyama I."/>
            <person name="Baba T."/>
            <person name="Yuzawa H."/>
            <person name="Kobayashi I."/>
            <person name="Cui L."/>
            <person name="Oguchi A."/>
            <person name="Aoki K."/>
            <person name="Nagai Y."/>
            <person name="Lian J.-Q."/>
            <person name="Ito T."/>
            <person name="Kanamori M."/>
            <person name="Matsumaru H."/>
            <person name="Maruyama A."/>
            <person name="Murakami H."/>
            <person name="Hosoyama A."/>
            <person name="Mizutani-Ui Y."/>
            <person name="Takahashi N.K."/>
            <person name="Sawano T."/>
            <person name="Inoue R."/>
            <person name="Kaito C."/>
            <person name="Sekimizu K."/>
            <person name="Hirakawa H."/>
            <person name="Kuhara S."/>
            <person name="Goto S."/>
            <person name="Yabuzaki J."/>
            <person name="Kanehisa M."/>
            <person name="Yamashita A."/>
            <person name="Oshima K."/>
            <person name="Furuya K."/>
            <person name="Yoshino C."/>
            <person name="Shiba T."/>
            <person name="Hattori M."/>
            <person name="Ogasawara N."/>
            <person name="Hayashi H."/>
            <person name="Hiramatsu K."/>
        </authorList>
    </citation>
    <scope>NUCLEOTIDE SEQUENCE [LARGE SCALE GENOMIC DNA]</scope>
    <source>
        <strain>N315</strain>
    </source>
</reference>
<reference key="2">
    <citation type="submission" date="2007-10" db="UniProtKB">
        <title>Shotgun proteomic analysis of total and membrane protein extracts of S. aureus strain N315.</title>
        <authorList>
            <person name="Vaezzadeh A.R."/>
            <person name="Deshusses J."/>
            <person name="Lescuyer P."/>
            <person name="Hochstrasser D.F."/>
        </authorList>
    </citation>
    <scope>IDENTIFICATION BY MASS SPECTROMETRY [LARGE SCALE ANALYSIS]</scope>
    <source>
        <strain>N315</strain>
    </source>
</reference>
<evidence type="ECO:0000250" key="1"/>
<evidence type="ECO:0000255" key="2">
    <source>
        <dbReference type="PROSITE-ProRule" id="PRU00280"/>
    </source>
</evidence>
<protein>
    <recommendedName>
        <fullName>Copper chaperone CopZ</fullName>
    </recommendedName>
</protein>